<organism>
    <name type="scientific">Escherichia coli (strain SE11)</name>
    <dbReference type="NCBI Taxonomy" id="409438"/>
    <lineage>
        <taxon>Bacteria</taxon>
        <taxon>Pseudomonadati</taxon>
        <taxon>Pseudomonadota</taxon>
        <taxon>Gammaproteobacteria</taxon>
        <taxon>Enterobacterales</taxon>
        <taxon>Enterobacteriaceae</taxon>
        <taxon>Escherichia</taxon>
    </lineage>
</organism>
<keyword id="KW-0004">4Fe-4S</keyword>
<keyword id="KW-0963">Cytoplasm</keyword>
<keyword id="KW-0408">Iron</keyword>
<keyword id="KW-0411">Iron-sulfur</keyword>
<keyword id="KW-0479">Metal-binding</keyword>
<keyword id="KW-0949">S-adenosyl-L-methionine</keyword>
<keyword id="KW-0808">Transferase</keyword>
<keyword id="KW-0819">tRNA processing</keyword>
<evidence type="ECO:0000255" key="1">
    <source>
        <dbReference type="HAMAP-Rule" id="MF_01864"/>
    </source>
</evidence>
<evidence type="ECO:0000255" key="2">
    <source>
        <dbReference type="PROSITE-ProRule" id="PRU01266"/>
    </source>
</evidence>
<protein>
    <recommendedName>
        <fullName evidence="1">tRNA-2-methylthio-N(6)-dimethylallyladenosine synthase</fullName>
        <ecNumber evidence="1">2.8.4.3</ecNumber>
    </recommendedName>
    <alternativeName>
        <fullName evidence="1">(Dimethylallyl)adenosine tRNA methylthiotransferase MiaB</fullName>
    </alternativeName>
    <alternativeName>
        <fullName evidence="1">tRNA-i(6)A37 methylthiotransferase</fullName>
    </alternativeName>
</protein>
<name>MIAB_ECOSE</name>
<accession>B6HYN0</accession>
<reference key="1">
    <citation type="journal article" date="2008" name="DNA Res.">
        <title>Complete genome sequence and comparative analysis of the wild-type commensal Escherichia coli strain SE11 isolated from a healthy adult.</title>
        <authorList>
            <person name="Oshima K."/>
            <person name="Toh H."/>
            <person name="Ogura Y."/>
            <person name="Sasamoto H."/>
            <person name="Morita H."/>
            <person name="Park S.-H."/>
            <person name="Ooka T."/>
            <person name="Iyoda S."/>
            <person name="Taylor T.D."/>
            <person name="Hayashi T."/>
            <person name="Itoh K."/>
            <person name="Hattori M."/>
        </authorList>
    </citation>
    <scope>NUCLEOTIDE SEQUENCE [LARGE SCALE GENOMIC DNA]</scope>
    <source>
        <strain>SE11</strain>
    </source>
</reference>
<feature type="chain" id="PRO_0000374284" description="tRNA-2-methylthio-N(6)-dimethylallyladenosine synthase">
    <location>
        <begin position="1"/>
        <end position="474"/>
    </location>
</feature>
<feature type="domain" description="MTTase N-terminal" evidence="1">
    <location>
        <begin position="3"/>
        <end position="120"/>
    </location>
</feature>
<feature type="domain" description="Radical SAM core" evidence="2">
    <location>
        <begin position="143"/>
        <end position="375"/>
    </location>
</feature>
<feature type="domain" description="TRAM" evidence="1">
    <location>
        <begin position="378"/>
        <end position="441"/>
    </location>
</feature>
<feature type="binding site" evidence="1">
    <location>
        <position position="12"/>
    </location>
    <ligand>
        <name>[4Fe-4S] cluster</name>
        <dbReference type="ChEBI" id="CHEBI:49883"/>
        <label>1</label>
    </ligand>
</feature>
<feature type="binding site" evidence="1">
    <location>
        <position position="49"/>
    </location>
    <ligand>
        <name>[4Fe-4S] cluster</name>
        <dbReference type="ChEBI" id="CHEBI:49883"/>
        <label>1</label>
    </ligand>
</feature>
<feature type="binding site" evidence="1">
    <location>
        <position position="83"/>
    </location>
    <ligand>
        <name>[4Fe-4S] cluster</name>
        <dbReference type="ChEBI" id="CHEBI:49883"/>
        <label>1</label>
    </ligand>
</feature>
<feature type="binding site" evidence="1">
    <location>
        <position position="157"/>
    </location>
    <ligand>
        <name>[4Fe-4S] cluster</name>
        <dbReference type="ChEBI" id="CHEBI:49883"/>
        <label>2</label>
        <note>4Fe-4S-S-AdoMet</note>
    </ligand>
</feature>
<feature type="binding site" evidence="1">
    <location>
        <position position="161"/>
    </location>
    <ligand>
        <name>[4Fe-4S] cluster</name>
        <dbReference type="ChEBI" id="CHEBI:49883"/>
        <label>2</label>
        <note>4Fe-4S-S-AdoMet</note>
    </ligand>
</feature>
<feature type="binding site" evidence="1">
    <location>
        <position position="164"/>
    </location>
    <ligand>
        <name>[4Fe-4S] cluster</name>
        <dbReference type="ChEBI" id="CHEBI:49883"/>
        <label>2</label>
        <note>4Fe-4S-S-AdoMet</note>
    </ligand>
</feature>
<proteinExistence type="inferred from homology"/>
<dbReference type="EC" id="2.8.4.3" evidence="1"/>
<dbReference type="EMBL" id="AP009240">
    <property type="protein sequence ID" value="BAG76256.1"/>
    <property type="molecule type" value="Genomic_DNA"/>
</dbReference>
<dbReference type="RefSeq" id="WP_000162739.1">
    <property type="nucleotide sequence ID" value="NC_011415.1"/>
</dbReference>
<dbReference type="SMR" id="B6HYN0"/>
<dbReference type="KEGG" id="ecy:ECSE_0732"/>
<dbReference type="HOGENOM" id="CLU_018697_2_0_6"/>
<dbReference type="Proteomes" id="UP000008199">
    <property type="component" value="Chromosome"/>
</dbReference>
<dbReference type="GO" id="GO:0005829">
    <property type="term" value="C:cytosol"/>
    <property type="evidence" value="ECO:0007669"/>
    <property type="project" value="TreeGrafter"/>
</dbReference>
<dbReference type="GO" id="GO:0051539">
    <property type="term" value="F:4 iron, 4 sulfur cluster binding"/>
    <property type="evidence" value="ECO:0007669"/>
    <property type="project" value="UniProtKB-UniRule"/>
</dbReference>
<dbReference type="GO" id="GO:0046872">
    <property type="term" value="F:metal ion binding"/>
    <property type="evidence" value="ECO:0007669"/>
    <property type="project" value="UniProtKB-KW"/>
</dbReference>
<dbReference type="GO" id="GO:0035597">
    <property type="term" value="F:N6-isopentenyladenosine methylthiotransferase activity"/>
    <property type="evidence" value="ECO:0007669"/>
    <property type="project" value="TreeGrafter"/>
</dbReference>
<dbReference type="CDD" id="cd01335">
    <property type="entry name" value="Radical_SAM"/>
    <property type="match status" value="1"/>
</dbReference>
<dbReference type="FunFam" id="3.40.50.12160:FF:000001">
    <property type="entry name" value="tRNA-2-methylthio-N(6)-dimethylallyladenosine synthase"/>
    <property type="match status" value="1"/>
</dbReference>
<dbReference type="FunFam" id="3.80.30.20:FF:000001">
    <property type="entry name" value="tRNA-2-methylthio-N(6)-dimethylallyladenosine synthase 2"/>
    <property type="match status" value="1"/>
</dbReference>
<dbReference type="Gene3D" id="3.40.50.12160">
    <property type="entry name" value="Methylthiotransferase, N-terminal domain"/>
    <property type="match status" value="1"/>
</dbReference>
<dbReference type="Gene3D" id="3.80.30.20">
    <property type="entry name" value="tm_1862 like domain"/>
    <property type="match status" value="1"/>
</dbReference>
<dbReference type="HAMAP" id="MF_01864">
    <property type="entry name" value="tRNA_metthiotr_MiaB"/>
    <property type="match status" value="1"/>
</dbReference>
<dbReference type="InterPro" id="IPR006638">
    <property type="entry name" value="Elp3/MiaA/NifB-like_rSAM"/>
</dbReference>
<dbReference type="InterPro" id="IPR005839">
    <property type="entry name" value="Methylthiotransferase"/>
</dbReference>
<dbReference type="InterPro" id="IPR020612">
    <property type="entry name" value="Methylthiotransferase_CS"/>
</dbReference>
<dbReference type="InterPro" id="IPR013848">
    <property type="entry name" value="Methylthiotransferase_N"/>
</dbReference>
<dbReference type="InterPro" id="IPR038135">
    <property type="entry name" value="Methylthiotransferase_N_sf"/>
</dbReference>
<dbReference type="InterPro" id="IPR006463">
    <property type="entry name" value="MiaB_methiolase"/>
</dbReference>
<dbReference type="InterPro" id="IPR007197">
    <property type="entry name" value="rSAM"/>
</dbReference>
<dbReference type="InterPro" id="IPR023404">
    <property type="entry name" value="rSAM_horseshoe"/>
</dbReference>
<dbReference type="InterPro" id="IPR002792">
    <property type="entry name" value="TRAM_dom"/>
</dbReference>
<dbReference type="NCBIfam" id="TIGR01574">
    <property type="entry name" value="miaB-methiolase"/>
    <property type="match status" value="1"/>
</dbReference>
<dbReference type="NCBIfam" id="TIGR00089">
    <property type="entry name" value="MiaB/RimO family radical SAM methylthiotransferase"/>
    <property type="match status" value="1"/>
</dbReference>
<dbReference type="PANTHER" id="PTHR43020">
    <property type="entry name" value="CDK5 REGULATORY SUBUNIT-ASSOCIATED PROTEIN 1"/>
    <property type="match status" value="1"/>
</dbReference>
<dbReference type="PANTHER" id="PTHR43020:SF2">
    <property type="entry name" value="MITOCHONDRIAL TRNA METHYLTHIOTRANSFERASE CDK5RAP1"/>
    <property type="match status" value="1"/>
</dbReference>
<dbReference type="Pfam" id="PF04055">
    <property type="entry name" value="Radical_SAM"/>
    <property type="match status" value="1"/>
</dbReference>
<dbReference type="Pfam" id="PF01938">
    <property type="entry name" value="TRAM"/>
    <property type="match status" value="1"/>
</dbReference>
<dbReference type="Pfam" id="PF00919">
    <property type="entry name" value="UPF0004"/>
    <property type="match status" value="1"/>
</dbReference>
<dbReference type="SFLD" id="SFLDF00273">
    <property type="entry name" value="(dimethylallyl)adenosine_tRNA"/>
    <property type="match status" value="1"/>
</dbReference>
<dbReference type="SFLD" id="SFLDG01082">
    <property type="entry name" value="B12-binding_domain_containing"/>
    <property type="match status" value="1"/>
</dbReference>
<dbReference type="SFLD" id="SFLDS00029">
    <property type="entry name" value="Radical_SAM"/>
    <property type="match status" value="1"/>
</dbReference>
<dbReference type="SMART" id="SM00729">
    <property type="entry name" value="Elp3"/>
    <property type="match status" value="1"/>
</dbReference>
<dbReference type="SUPFAM" id="SSF102114">
    <property type="entry name" value="Radical SAM enzymes"/>
    <property type="match status" value="1"/>
</dbReference>
<dbReference type="PROSITE" id="PS51449">
    <property type="entry name" value="MTTASE_N"/>
    <property type="match status" value="1"/>
</dbReference>
<dbReference type="PROSITE" id="PS01278">
    <property type="entry name" value="MTTASE_RADICAL"/>
    <property type="match status" value="1"/>
</dbReference>
<dbReference type="PROSITE" id="PS51918">
    <property type="entry name" value="RADICAL_SAM"/>
    <property type="match status" value="1"/>
</dbReference>
<dbReference type="PROSITE" id="PS50926">
    <property type="entry name" value="TRAM"/>
    <property type="match status" value="1"/>
</dbReference>
<gene>
    <name evidence="1" type="primary">miaB</name>
    <name type="ordered locus">ECSE_0732</name>
</gene>
<comment type="function">
    <text evidence="1">Catalyzes the methylthiolation of N6-(dimethylallyl)adenosine (i(6)A), leading to the formation of 2-methylthio-N6-(dimethylallyl)adenosine (ms(2)i(6)A) at position 37 in tRNAs that read codons beginning with uridine.</text>
</comment>
<comment type="catalytic activity">
    <reaction evidence="1">
        <text>N(6)-dimethylallyladenosine(37) in tRNA + (sulfur carrier)-SH + AH2 + 2 S-adenosyl-L-methionine = 2-methylsulfanyl-N(6)-dimethylallyladenosine(37) in tRNA + (sulfur carrier)-H + 5'-deoxyadenosine + L-methionine + A + S-adenosyl-L-homocysteine + 2 H(+)</text>
        <dbReference type="Rhea" id="RHEA:37067"/>
        <dbReference type="Rhea" id="RHEA-COMP:10375"/>
        <dbReference type="Rhea" id="RHEA-COMP:10376"/>
        <dbReference type="Rhea" id="RHEA-COMP:14737"/>
        <dbReference type="Rhea" id="RHEA-COMP:14739"/>
        <dbReference type="ChEBI" id="CHEBI:13193"/>
        <dbReference type="ChEBI" id="CHEBI:15378"/>
        <dbReference type="ChEBI" id="CHEBI:17319"/>
        <dbReference type="ChEBI" id="CHEBI:17499"/>
        <dbReference type="ChEBI" id="CHEBI:29917"/>
        <dbReference type="ChEBI" id="CHEBI:57844"/>
        <dbReference type="ChEBI" id="CHEBI:57856"/>
        <dbReference type="ChEBI" id="CHEBI:59789"/>
        <dbReference type="ChEBI" id="CHEBI:64428"/>
        <dbReference type="ChEBI" id="CHEBI:74415"/>
        <dbReference type="ChEBI" id="CHEBI:74417"/>
        <dbReference type="EC" id="2.8.4.3"/>
    </reaction>
</comment>
<comment type="cofactor">
    <cofactor evidence="1">
        <name>[4Fe-4S] cluster</name>
        <dbReference type="ChEBI" id="CHEBI:49883"/>
    </cofactor>
    <text evidence="1">Binds 2 [4Fe-4S] clusters. One cluster is coordinated with 3 cysteines and an exchangeable S-adenosyl-L-methionine.</text>
</comment>
<comment type="subunit">
    <text evidence="1">Monomer.</text>
</comment>
<comment type="subcellular location">
    <subcellularLocation>
        <location evidence="1">Cytoplasm</location>
    </subcellularLocation>
</comment>
<comment type="similarity">
    <text evidence="1">Belongs to the methylthiotransferase family. MiaB subfamily.</text>
</comment>
<sequence>MTKKLHIKTWGCQMNEYDSSKMADLLDATHGYQLTDVAEEADVLLLNTCSIREKAQEKVFHQLGRWKLLKEKNPDLIIGVGGCVASQEGEHIRQRAHYVDIIFGPQTLHRLPEMINSVRGDRSPVVDISFPEIEKFDRLPEPRAEGPTAFVSIMEGCNKYCTYCVVPYTRGEEVSRPSDDILFEIAQLAAQGVREVNLLGQNVNAWRGENYDGTTGSFADLLRLVAAIDGIDRIRFTTSHPIEFTDDIIEVYRDTPELVSFLHLPVQSGSDRILNLMGRTHTALEYKAIIRKLRAARPDIQISSDFIVGFPGETTEDFEKTMKLIADVNFDMSYSFIFSARPGTPAADMVDDVPEEEKKQRLYILQERINQQAMAWSRRMLGTTQRILVEGTSRKSIMELSGRTENNRVVNFEGTPDMIGKFVDVEITDVYPNSLRGKVVRTEDEMGLRMAETPESVIARTRKENDLGVGYYQP</sequence>